<accession>O93448</accession>
<name>UTS1_ONCMY</name>
<proteinExistence type="evidence at transcript level"/>
<evidence type="ECO:0000250" key="1"/>
<evidence type="ECO:0000255" key="2"/>
<evidence type="ECO:0000305" key="3"/>
<comment type="function">
    <text>Urotensin is found in the teleost caudal neurosecretory system. It has a suggested role in osmoregulation and as a corticotropin-releasing factor. The non-hormonal portion of this precursor may be a urotensin binding protein, urophysin.</text>
</comment>
<comment type="subcellular location">
    <subcellularLocation>
        <location>Secreted</location>
    </subcellularLocation>
</comment>
<comment type="similarity">
    <text evidence="3">Belongs to the sauvagine/corticotropin-releasing factor/urotensin I family.</text>
</comment>
<sequence length="165" mass="18632">MKPVPLILLLATVLLSSHIPPSVCRPRDLAMFDGHGYKSQLDEVLLKAGDNAISYLIGEKILRYLQRNPRLQAGLPPQFPFEVTPLGSRGLGHLARSLPPLEEQRAPEEGNSLEEFVELTKRNDDPPISIDLTFHLLRNMIEMARIESQKEQAELNRKYLDEVGK</sequence>
<protein>
    <recommendedName>
        <fullName>UI</fullName>
    </recommendedName>
    <component>
        <recommendedName>
            <fullName>Urophysin</fullName>
        </recommendedName>
    </component>
    <component>
        <recommendedName>
            <fullName>Urotensin-1</fullName>
        </recommendedName>
        <alternativeName>
            <fullName>Urotensin I</fullName>
        </alternativeName>
    </component>
</protein>
<feature type="signal peptide" evidence="2">
    <location>
        <begin position="1"/>
        <end position="18"/>
    </location>
</feature>
<feature type="chain" id="PRO_0000006253" description="Urophysin" evidence="2">
    <location>
        <begin position="19"/>
        <end position="120"/>
    </location>
</feature>
<feature type="peptide" id="PRO_0000006254" description="Urotensin-1">
    <location>
        <begin position="123"/>
        <end position="163"/>
    </location>
</feature>
<feature type="modified residue" description="Valine amide" evidence="1">
    <location>
        <position position="163"/>
    </location>
</feature>
<reference key="1">
    <citation type="journal article" date="1999" name="Gen. Comp. Endocrinol.">
        <title>Rainbow trout (Oncorhynchus mykiss) urotensin-I: structural differences between urotensins-I and urocortins.</title>
        <authorList>
            <person name="Barsyte D."/>
            <person name="Tipping D.R."/>
            <person name="Smart D."/>
            <person name="Conlon J.M."/>
            <person name="Baker B.I."/>
            <person name="Lovejoy D.A."/>
        </authorList>
    </citation>
    <scope>NUCLEOTIDE SEQUENCE [MRNA]</scope>
    <source>
        <tissue>Hypothalamus</tissue>
    </source>
</reference>
<dbReference type="EMBL" id="AJ005264">
    <property type="protein sequence ID" value="CAA06461.1"/>
    <property type="molecule type" value="mRNA"/>
</dbReference>
<dbReference type="RefSeq" id="NP_001117815.1">
    <property type="nucleotide sequence ID" value="NM_001124343.2"/>
</dbReference>
<dbReference type="SMR" id="O93448"/>
<dbReference type="Ensembl" id="ENSOMYT00000166895.1">
    <property type="protein sequence ID" value="ENSOMYP00000123692.1"/>
    <property type="gene ID" value="ENSOMYG00000051449.1"/>
</dbReference>
<dbReference type="GeneID" id="100136016"/>
<dbReference type="KEGG" id="omy:100136016"/>
<dbReference type="CTD" id="7349"/>
<dbReference type="GeneTree" id="ENSGT00940000154473"/>
<dbReference type="OrthoDB" id="9837731at2759"/>
<dbReference type="Proteomes" id="UP000694395">
    <property type="component" value="Chromosome 4"/>
</dbReference>
<dbReference type="GO" id="GO:0005576">
    <property type="term" value="C:extracellular region"/>
    <property type="evidence" value="ECO:0007669"/>
    <property type="project" value="UniProtKB-SubCell"/>
</dbReference>
<dbReference type="GO" id="GO:0005179">
    <property type="term" value="F:hormone activity"/>
    <property type="evidence" value="ECO:0007669"/>
    <property type="project" value="UniProtKB-KW"/>
</dbReference>
<dbReference type="Gene3D" id="6.10.250.1920">
    <property type="match status" value="1"/>
</dbReference>
<dbReference type="InterPro" id="IPR018446">
    <property type="entry name" value="Corticotropin-releasing_fac_CS"/>
</dbReference>
<dbReference type="InterPro" id="IPR000187">
    <property type="entry name" value="CRF"/>
</dbReference>
<dbReference type="InterPro" id="IPR003620">
    <property type="entry name" value="Urocortin_CRF"/>
</dbReference>
<dbReference type="PANTHER" id="PTHR15035">
    <property type="entry name" value="CORTICOLIBERIN/UROCORTIN"/>
    <property type="match status" value="1"/>
</dbReference>
<dbReference type="PANTHER" id="PTHR15035:SF11">
    <property type="entry name" value="UROCORTIN"/>
    <property type="match status" value="1"/>
</dbReference>
<dbReference type="Pfam" id="PF00473">
    <property type="entry name" value="CRF"/>
    <property type="match status" value="1"/>
</dbReference>
<dbReference type="PRINTS" id="PR01612">
    <property type="entry name" value="CRFFAMILY"/>
</dbReference>
<dbReference type="SMART" id="SM00039">
    <property type="entry name" value="CRF"/>
    <property type="match status" value="1"/>
</dbReference>
<dbReference type="PROSITE" id="PS00511">
    <property type="entry name" value="CRF"/>
    <property type="match status" value="1"/>
</dbReference>
<keyword id="KW-0027">Amidation</keyword>
<keyword id="KW-0165">Cleavage on pair of basic residues</keyword>
<keyword id="KW-0372">Hormone</keyword>
<keyword id="KW-0964">Secreted</keyword>
<keyword id="KW-0732">Signal</keyword>
<organism>
    <name type="scientific">Oncorhynchus mykiss</name>
    <name type="common">Rainbow trout</name>
    <name type="synonym">Salmo gairdneri</name>
    <dbReference type="NCBI Taxonomy" id="8022"/>
    <lineage>
        <taxon>Eukaryota</taxon>
        <taxon>Metazoa</taxon>
        <taxon>Chordata</taxon>
        <taxon>Craniata</taxon>
        <taxon>Vertebrata</taxon>
        <taxon>Euteleostomi</taxon>
        <taxon>Actinopterygii</taxon>
        <taxon>Neopterygii</taxon>
        <taxon>Teleostei</taxon>
        <taxon>Protacanthopterygii</taxon>
        <taxon>Salmoniformes</taxon>
        <taxon>Salmonidae</taxon>
        <taxon>Salmoninae</taxon>
        <taxon>Oncorhynchus</taxon>
    </lineage>
</organism>